<comment type="subcellular location">
    <subcellularLocation>
        <location evidence="2">Cell membrane</location>
        <topology evidence="3">Single-pass membrane protein</topology>
    </subcellularLocation>
</comment>
<comment type="similarity">
    <text evidence="3">Belongs to the YjiK family.</text>
</comment>
<comment type="sequence caution" evidence="3">
    <conflict type="erroneous initiation">
        <sequence resource="EMBL-CDS" id="AAA97229"/>
    </conflict>
</comment>
<comment type="sequence caution" evidence="3">
    <conflict type="erroneous initiation">
        <sequence resource="EMBL-CDS" id="BAE78326"/>
    </conflict>
</comment>
<name>YJIK_ECOLI</name>
<feature type="chain" id="PRO_0000169790" description="Uncharacterized protein YjiK">
    <location>
        <begin position="1"/>
        <end position="286"/>
    </location>
</feature>
<feature type="transmembrane region" description="Helical" evidence="1">
    <location>
        <begin position="11"/>
        <end position="31"/>
    </location>
</feature>
<dbReference type="EMBL" id="U14003">
    <property type="protein sequence ID" value="AAA97229.1"/>
    <property type="status" value="ALT_INIT"/>
    <property type="molecule type" value="Genomic_DNA"/>
</dbReference>
<dbReference type="EMBL" id="U00096">
    <property type="protein sequence ID" value="AAC77289.3"/>
    <property type="molecule type" value="Genomic_DNA"/>
</dbReference>
<dbReference type="EMBL" id="AP009048">
    <property type="protein sequence ID" value="BAE78326.1"/>
    <property type="status" value="ALT_INIT"/>
    <property type="molecule type" value="Genomic_DNA"/>
</dbReference>
<dbReference type="PIR" id="S56558">
    <property type="entry name" value="S56558"/>
</dbReference>
<dbReference type="RefSeq" id="NP_418753.3">
    <property type="nucleotide sequence ID" value="NC_000913.3"/>
</dbReference>
<dbReference type="RefSeq" id="WP_001350572.1">
    <property type="nucleotide sequence ID" value="NZ_LN832404.1"/>
</dbReference>
<dbReference type="SMR" id="P39382"/>
<dbReference type="BioGRID" id="4259664">
    <property type="interactions" value="8"/>
</dbReference>
<dbReference type="FunCoup" id="P39382">
    <property type="interactions" value="154"/>
</dbReference>
<dbReference type="STRING" id="511145.b4333"/>
<dbReference type="PaxDb" id="511145-b4333"/>
<dbReference type="EnsemblBacteria" id="AAC77289">
    <property type="protein sequence ID" value="AAC77289"/>
    <property type="gene ID" value="b4333"/>
</dbReference>
<dbReference type="GeneID" id="948957"/>
<dbReference type="KEGG" id="ecj:JW5869"/>
<dbReference type="KEGG" id="eco:b4333"/>
<dbReference type="KEGG" id="ecoc:C3026_23420"/>
<dbReference type="PATRIC" id="fig|511145.12.peg.4478"/>
<dbReference type="EchoBASE" id="EB2460"/>
<dbReference type="eggNOG" id="COG3204">
    <property type="taxonomic scope" value="Bacteria"/>
</dbReference>
<dbReference type="HOGENOM" id="CLU_055438_1_1_6"/>
<dbReference type="InParanoid" id="P39382"/>
<dbReference type="OMA" id="KERDPML"/>
<dbReference type="OrthoDB" id="6080098at2"/>
<dbReference type="PhylomeDB" id="P39382"/>
<dbReference type="BioCyc" id="EcoCyc:G7930-MONOMER"/>
<dbReference type="PRO" id="PR:P39382"/>
<dbReference type="Proteomes" id="UP000000625">
    <property type="component" value="Chromosome"/>
</dbReference>
<dbReference type="GO" id="GO:0005886">
    <property type="term" value="C:plasma membrane"/>
    <property type="evidence" value="ECO:0000314"/>
    <property type="project" value="EcoCyc"/>
</dbReference>
<dbReference type="CDD" id="cd09971">
    <property type="entry name" value="SdiA-regulated"/>
    <property type="match status" value="1"/>
</dbReference>
<dbReference type="Gene3D" id="2.120.10.30">
    <property type="entry name" value="TolB, C-terminal domain"/>
    <property type="match status" value="1"/>
</dbReference>
<dbReference type="InterPro" id="IPR011042">
    <property type="entry name" value="6-blade_b-propeller_TolB-like"/>
</dbReference>
<dbReference type="InterPro" id="IPR009722">
    <property type="entry name" value="YjiK/CarP"/>
</dbReference>
<dbReference type="Pfam" id="PF06977">
    <property type="entry name" value="SdiA-regulated"/>
    <property type="match status" value="1"/>
</dbReference>
<dbReference type="SUPFAM" id="SSF50956">
    <property type="entry name" value="Thermostable phytase (3-phytase)"/>
    <property type="match status" value="1"/>
</dbReference>
<dbReference type="PROSITE" id="PS51257">
    <property type="entry name" value="PROKAR_LIPOPROTEIN"/>
    <property type="match status" value="1"/>
</dbReference>
<protein>
    <recommendedName>
        <fullName>Uncharacterized protein YjiK</fullName>
    </recommendedName>
</protein>
<gene>
    <name type="primary">yjiK</name>
    <name type="ordered locus">b4333</name>
    <name type="ordered locus">JW5869</name>
</gene>
<evidence type="ECO:0000255" key="1"/>
<evidence type="ECO:0000255" key="2">
    <source>
        <dbReference type="PROSITE-ProRule" id="PRU00303"/>
    </source>
</evidence>
<evidence type="ECO:0000305" key="3"/>
<organism>
    <name type="scientific">Escherichia coli (strain K12)</name>
    <dbReference type="NCBI Taxonomy" id="83333"/>
    <lineage>
        <taxon>Bacteria</taxon>
        <taxon>Pseudomonadati</taxon>
        <taxon>Pseudomonadota</taxon>
        <taxon>Gammaproteobacteria</taxon>
        <taxon>Enterobacterales</taxon>
        <taxon>Enterobacteriaceae</taxon>
        <taxon>Escherichia</taxon>
    </lineage>
</organism>
<keyword id="KW-1003">Cell membrane</keyword>
<keyword id="KW-0472">Membrane</keyword>
<keyword id="KW-1185">Reference proteome</keyword>
<keyword id="KW-0812">Transmembrane</keyword>
<keyword id="KW-1133">Transmembrane helix</keyword>
<accession>P39382</accession>
<accession>Q2M5Y0</accession>
<reference key="1">
    <citation type="journal article" date="1995" name="Nucleic Acids Res.">
        <title>Analysis of the Escherichia coli genome VI: DNA sequence of the region from 92.8 through 100 minutes.</title>
        <authorList>
            <person name="Burland V.D."/>
            <person name="Plunkett G. III"/>
            <person name="Sofia H.J."/>
            <person name="Daniels D.L."/>
            <person name="Blattner F.R."/>
        </authorList>
    </citation>
    <scope>NUCLEOTIDE SEQUENCE [LARGE SCALE GENOMIC DNA]</scope>
    <source>
        <strain>K12 / MG1655 / ATCC 47076</strain>
    </source>
</reference>
<reference key="2">
    <citation type="journal article" date="1997" name="Science">
        <title>The complete genome sequence of Escherichia coli K-12.</title>
        <authorList>
            <person name="Blattner F.R."/>
            <person name="Plunkett G. III"/>
            <person name="Bloch C.A."/>
            <person name="Perna N.T."/>
            <person name="Burland V."/>
            <person name="Riley M."/>
            <person name="Collado-Vides J."/>
            <person name="Glasner J.D."/>
            <person name="Rode C.K."/>
            <person name="Mayhew G.F."/>
            <person name="Gregor J."/>
            <person name="Davis N.W."/>
            <person name="Kirkpatrick H.A."/>
            <person name="Goeden M.A."/>
            <person name="Rose D.J."/>
            <person name="Mau B."/>
            <person name="Shao Y."/>
        </authorList>
    </citation>
    <scope>NUCLEOTIDE SEQUENCE [LARGE SCALE GENOMIC DNA]</scope>
    <source>
        <strain>K12 / MG1655 / ATCC 47076</strain>
    </source>
</reference>
<reference key="3">
    <citation type="journal article" date="2006" name="Mol. Syst. Biol.">
        <title>Highly accurate genome sequences of Escherichia coli K-12 strains MG1655 and W3110.</title>
        <authorList>
            <person name="Hayashi K."/>
            <person name="Morooka N."/>
            <person name="Yamamoto Y."/>
            <person name="Fujita K."/>
            <person name="Isono K."/>
            <person name="Choi S."/>
            <person name="Ohtsubo E."/>
            <person name="Baba T."/>
            <person name="Wanner B.L."/>
            <person name="Mori H."/>
            <person name="Horiuchi T."/>
        </authorList>
    </citation>
    <scope>NUCLEOTIDE SEQUENCE [LARGE SCALE GENOMIC DNA]</scope>
    <source>
        <strain>K12 / W3110 / ATCC 27325 / DSM 5911</strain>
    </source>
</reference>
<proteinExistence type="inferred from homology"/>
<sequence length="286" mass="31956">MTKSISLSKRISIIVILFAIVAVCTFFVQSCARKSNHAASFQNYHATIDGKEIAGITNNISSLTWSAQSNTLFSTINKPAAIVEMTTNGDFIRTIPLDFVKDLETIEYIGDNQFVISDERDYAIYVISLTPNSEVKILKKIKIPLQDSPTNCGFEGLAYSRQDHTFWFFKEKNPIEVYKVNGLLSSNELHISKDEALQRQFTLDDVSGAEFNQQKNTLLVLSHESRALQEVTLVGEVIGEMSLTKGSRGLSHNIKQAEGVAMDASGNIYIVSEPNRFYRFTPQSSH</sequence>